<proteinExistence type="inferred from homology"/>
<protein>
    <recommendedName>
        <fullName evidence="1">UvrABC system protein C</fullName>
        <shortName evidence="1">Protein UvrC</shortName>
    </recommendedName>
    <alternativeName>
        <fullName evidence="1">Excinuclease ABC subunit C</fullName>
    </alternativeName>
</protein>
<name>UVRC_HAEDU</name>
<keyword id="KW-0963">Cytoplasm</keyword>
<keyword id="KW-0227">DNA damage</keyword>
<keyword id="KW-0228">DNA excision</keyword>
<keyword id="KW-0234">DNA repair</keyword>
<keyword id="KW-0267">Excision nuclease</keyword>
<keyword id="KW-1185">Reference proteome</keyword>
<keyword id="KW-0742">SOS response</keyword>
<sequence length="612" mass="69088">MSQFNAKAFLADVPHLPGVYRMYDANQAIIYVGKAKDLKKRLASYFRSQVASKKIEALVGNIHHIDTTITHSETEALLLEHNYIKQHQPKYNVLLRDDKSYPYLLLTKHQHPRLTAFRGSKKVAGEYFGPYPNVSAVRESLNLLQKIFPIRQCEDNYYKNRSRPCLQHQIGRCLAPCVTGYCSQQEYDNQVKWVRLFLQGKDSQVIDYLMQKMEIAASELDFETAARFRDQIQSVRAVQEKQFVANQRLDDLDIISIAYQSGLACAHILFIRQGKVLGNRAYFPKVPSHTDLTELADTFIGQFYLQLNQHRSIPNQIILDQPLTESNALAQLLTEQAGHKVTIITNHVRGDKSRYLALAQTNARAALSLQLKQSTTIHKRYDALKILLKLPTIKRMECFDISHTMGSQTVASCVVFDENGPLKSDYRRFNIEGITGGDDYAGMEQALVKRYDKPLPIEKIPDIIFIDGGKGQLNRALQVFEKLTVAWDKHKPLLIGVAKGAERKAGLETLIIGRLKKEIHLPIDSPALHLIQHIRDESHHHAISGHRKKRQKAFVESGLESIAGVGAKRRQALLKYLGGMQGVKSATLAEIESVPGISKTLAGVIFDTLHNS</sequence>
<evidence type="ECO:0000255" key="1">
    <source>
        <dbReference type="HAMAP-Rule" id="MF_00203"/>
    </source>
</evidence>
<reference key="1">
    <citation type="submission" date="2003-06" db="EMBL/GenBank/DDBJ databases">
        <title>The complete genome sequence of Haemophilus ducreyi.</title>
        <authorList>
            <person name="Munson R.S. Jr."/>
            <person name="Ray W.C."/>
            <person name="Mahairas G."/>
            <person name="Sabo P."/>
            <person name="Mungur R."/>
            <person name="Johnson L."/>
            <person name="Nguyen D."/>
            <person name="Wang J."/>
            <person name="Forst C."/>
            <person name="Hood L."/>
        </authorList>
    </citation>
    <scope>NUCLEOTIDE SEQUENCE [LARGE SCALE GENOMIC DNA]</scope>
    <source>
        <strain>35000HP / ATCC 700724</strain>
    </source>
</reference>
<gene>
    <name evidence="1" type="primary">uvrC</name>
    <name type="ordered locus">HD_1812</name>
</gene>
<feature type="chain" id="PRO_0000138303" description="UvrABC system protein C">
    <location>
        <begin position="1"/>
        <end position="612"/>
    </location>
</feature>
<feature type="domain" description="GIY-YIG" evidence="1">
    <location>
        <begin position="15"/>
        <end position="93"/>
    </location>
</feature>
<feature type="domain" description="UVR" evidence="1">
    <location>
        <begin position="203"/>
        <end position="238"/>
    </location>
</feature>
<accession>Q7VKR0</accession>
<dbReference type="EMBL" id="AE017143">
    <property type="protein sequence ID" value="AAP96562.1"/>
    <property type="molecule type" value="Genomic_DNA"/>
</dbReference>
<dbReference type="RefSeq" id="WP_010945591.1">
    <property type="nucleotide sequence ID" value="NC_002940.2"/>
</dbReference>
<dbReference type="SMR" id="Q7VKR0"/>
<dbReference type="STRING" id="233412.HD_1812"/>
<dbReference type="KEGG" id="hdu:HD_1812"/>
<dbReference type="eggNOG" id="COG0322">
    <property type="taxonomic scope" value="Bacteria"/>
</dbReference>
<dbReference type="HOGENOM" id="CLU_014841_3_2_6"/>
<dbReference type="OrthoDB" id="9804933at2"/>
<dbReference type="Proteomes" id="UP000001022">
    <property type="component" value="Chromosome"/>
</dbReference>
<dbReference type="GO" id="GO:0005737">
    <property type="term" value="C:cytoplasm"/>
    <property type="evidence" value="ECO:0007669"/>
    <property type="project" value="UniProtKB-SubCell"/>
</dbReference>
<dbReference type="GO" id="GO:0009380">
    <property type="term" value="C:excinuclease repair complex"/>
    <property type="evidence" value="ECO:0007669"/>
    <property type="project" value="InterPro"/>
</dbReference>
<dbReference type="GO" id="GO:0003677">
    <property type="term" value="F:DNA binding"/>
    <property type="evidence" value="ECO:0007669"/>
    <property type="project" value="UniProtKB-UniRule"/>
</dbReference>
<dbReference type="GO" id="GO:0009381">
    <property type="term" value="F:excinuclease ABC activity"/>
    <property type="evidence" value="ECO:0007669"/>
    <property type="project" value="UniProtKB-UniRule"/>
</dbReference>
<dbReference type="GO" id="GO:0006289">
    <property type="term" value="P:nucleotide-excision repair"/>
    <property type="evidence" value="ECO:0007669"/>
    <property type="project" value="UniProtKB-UniRule"/>
</dbReference>
<dbReference type="GO" id="GO:0009432">
    <property type="term" value="P:SOS response"/>
    <property type="evidence" value="ECO:0007669"/>
    <property type="project" value="UniProtKB-UniRule"/>
</dbReference>
<dbReference type="CDD" id="cd10434">
    <property type="entry name" value="GIY-YIG_UvrC_Cho"/>
    <property type="match status" value="1"/>
</dbReference>
<dbReference type="FunFam" id="3.30.420.340:FF:000001">
    <property type="entry name" value="UvrABC system protein C"/>
    <property type="match status" value="1"/>
</dbReference>
<dbReference type="FunFam" id="3.40.1440.10:FF:000001">
    <property type="entry name" value="UvrABC system protein C"/>
    <property type="match status" value="1"/>
</dbReference>
<dbReference type="Gene3D" id="1.10.150.20">
    <property type="entry name" value="5' to 3' exonuclease, C-terminal subdomain"/>
    <property type="match status" value="1"/>
</dbReference>
<dbReference type="Gene3D" id="3.40.1440.10">
    <property type="entry name" value="GIY-YIG endonuclease"/>
    <property type="match status" value="1"/>
</dbReference>
<dbReference type="Gene3D" id="4.10.860.10">
    <property type="entry name" value="UVR domain"/>
    <property type="match status" value="1"/>
</dbReference>
<dbReference type="Gene3D" id="3.30.420.340">
    <property type="entry name" value="UvrC, RNAse H endonuclease domain"/>
    <property type="match status" value="1"/>
</dbReference>
<dbReference type="HAMAP" id="MF_00203">
    <property type="entry name" value="UvrC"/>
    <property type="match status" value="1"/>
</dbReference>
<dbReference type="InterPro" id="IPR000305">
    <property type="entry name" value="GIY-YIG_endonuc"/>
</dbReference>
<dbReference type="InterPro" id="IPR035901">
    <property type="entry name" value="GIY-YIG_endonuc_sf"/>
</dbReference>
<dbReference type="InterPro" id="IPR047296">
    <property type="entry name" value="GIY-YIG_UvrC_Cho"/>
</dbReference>
<dbReference type="InterPro" id="IPR010994">
    <property type="entry name" value="RuvA_2-like"/>
</dbReference>
<dbReference type="InterPro" id="IPR001943">
    <property type="entry name" value="UVR_dom"/>
</dbReference>
<dbReference type="InterPro" id="IPR036876">
    <property type="entry name" value="UVR_dom_sf"/>
</dbReference>
<dbReference type="InterPro" id="IPR050066">
    <property type="entry name" value="UvrABC_protein_C"/>
</dbReference>
<dbReference type="InterPro" id="IPR004791">
    <property type="entry name" value="UvrC"/>
</dbReference>
<dbReference type="InterPro" id="IPR001162">
    <property type="entry name" value="UvrC_RNase_H_dom"/>
</dbReference>
<dbReference type="InterPro" id="IPR038476">
    <property type="entry name" value="UvrC_RNase_H_dom_sf"/>
</dbReference>
<dbReference type="NCBIfam" id="TIGR00194">
    <property type="entry name" value="uvrC"/>
    <property type="match status" value="1"/>
</dbReference>
<dbReference type="PANTHER" id="PTHR30562:SF1">
    <property type="entry name" value="UVRABC SYSTEM PROTEIN C"/>
    <property type="match status" value="1"/>
</dbReference>
<dbReference type="PANTHER" id="PTHR30562">
    <property type="entry name" value="UVRC/OXIDOREDUCTASE"/>
    <property type="match status" value="1"/>
</dbReference>
<dbReference type="Pfam" id="PF01541">
    <property type="entry name" value="GIY-YIG"/>
    <property type="match status" value="1"/>
</dbReference>
<dbReference type="Pfam" id="PF02151">
    <property type="entry name" value="UVR"/>
    <property type="match status" value="1"/>
</dbReference>
<dbReference type="Pfam" id="PF22920">
    <property type="entry name" value="UvrC_RNaseH"/>
    <property type="match status" value="1"/>
</dbReference>
<dbReference type="Pfam" id="PF08459">
    <property type="entry name" value="UvrC_RNaseH_dom"/>
    <property type="match status" value="1"/>
</dbReference>
<dbReference type="SMART" id="SM00465">
    <property type="entry name" value="GIYc"/>
    <property type="match status" value="1"/>
</dbReference>
<dbReference type="SUPFAM" id="SSF46600">
    <property type="entry name" value="C-terminal UvrC-binding domain of UvrB"/>
    <property type="match status" value="1"/>
</dbReference>
<dbReference type="SUPFAM" id="SSF82771">
    <property type="entry name" value="GIY-YIG endonuclease"/>
    <property type="match status" value="1"/>
</dbReference>
<dbReference type="SUPFAM" id="SSF47781">
    <property type="entry name" value="RuvA domain 2-like"/>
    <property type="match status" value="1"/>
</dbReference>
<dbReference type="PROSITE" id="PS50164">
    <property type="entry name" value="GIY_YIG"/>
    <property type="match status" value="1"/>
</dbReference>
<dbReference type="PROSITE" id="PS50151">
    <property type="entry name" value="UVR"/>
    <property type="match status" value="1"/>
</dbReference>
<dbReference type="PROSITE" id="PS50165">
    <property type="entry name" value="UVRC"/>
    <property type="match status" value="1"/>
</dbReference>
<organism>
    <name type="scientific">Haemophilus ducreyi (strain 35000HP / ATCC 700724)</name>
    <dbReference type="NCBI Taxonomy" id="233412"/>
    <lineage>
        <taxon>Bacteria</taxon>
        <taxon>Pseudomonadati</taxon>
        <taxon>Pseudomonadota</taxon>
        <taxon>Gammaproteobacteria</taxon>
        <taxon>Pasteurellales</taxon>
        <taxon>Pasteurellaceae</taxon>
        <taxon>Haemophilus</taxon>
    </lineage>
</organism>
<comment type="function">
    <text evidence="1">The UvrABC repair system catalyzes the recognition and processing of DNA lesions. UvrC both incises the 5' and 3' sides of the lesion. The N-terminal half is responsible for the 3' incision and the C-terminal half is responsible for the 5' incision.</text>
</comment>
<comment type="subunit">
    <text evidence="1">Interacts with UvrB in an incision complex.</text>
</comment>
<comment type="subcellular location">
    <subcellularLocation>
        <location evidence="1">Cytoplasm</location>
    </subcellularLocation>
</comment>
<comment type="similarity">
    <text evidence="1">Belongs to the UvrC family.</text>
</comment>